<comment type="function">
    <text evidence="1">Guanine nucleotide exchange factor (GEF) which may activate the small GTPases Rab. May promote the exchange of GDP to GTP, converting inactive GDP-bound Rab proteins into their active GTP-bound form (By similarity).</text>
</comment>
<comment type="subcellular location">
    <subcellularLocation>
        <location evidence="7">Membrane</location>
        <topology evidence="7">Single-pass membrane protein</topology>
    </subcellularLocation>
</comment>
<comment type="similarity">
    <text evidence="7">Belongs to the RAB6IP1 family.</text>
</comment>
<comment type="sequence caution" evidence="7">
    <conflict type="erroneous gene model prediction">
        <sequence resource="EMBL-CDS" id="CAI11568"/>
    </conflict>
</comment>
<keyword id="KW-0344">Guanine-nucleotide releasing factor</keyword>
<keyword id="KW-0472">Membrane</keyword>
<keyword id="KW-1185">Reference proteome</keyword>
<keyword id="KW-0677">Repeat</keyword>
<keyword id="KW-0812">Transmembrane</keyword>
<keyword id="KW-1133">Transmembrane helix</keyword>
<dbReference type="EMBL" id="BX001012">
    <property type="protein sequence ID" value="CAI11568.1"/>
    <property type="status" value="ALT_SEQ"/>
    <property type="molecule type" value="Genomic_DNA"/>
</dbReference>
<dbReference type="EMBL" id="BC067136">
    <property type="protein sequence ID" value="AAH67136.1"/>
    <property type="molecule type" value="mRNA"/>
</dbReference>
<dbReference type="RefSeq" id="NP_997809.1">
    <property type="nucleotide sequence ID" value="NM_212644.1"/>
</dbReference>
<dbReference type="SMR" id="Q6NXD8"/>
<dbReference type="BioGRID" id="81819">
    <property type="interactions" value="1"/>
</dbReference>
<dbReference type="FunCoup" id="Q6NXD8">
    <property type="interactions" value="1075"/>
</dbReference>
<dbReference type="STRING" id="7955.ENSDARP00000119547"/>
<dbReference type="PaxDb" id="7955-ENSDARP00000073917"/>
<dbReference type="Ensembl" id="ENSDART00000033053">
    <property type="protein sequence ID" value="ENSDARP00000032722"/>
    <property type="gene ID" value="ENSDARG00000003789"/>
</dbReference>
<dbReference type="GeneID" id="323528"/>
<dbReference type="KEGG" id="dre:323528"/>
<dbReference type="AGR" id="ZFIN:ZDB-GENE-030131-2248"/>
<dbReference type="CTD" id="160518"/>
<dbReference type="ZFIN" id="ZDB-GENE-030131-2248">
    <property type="gene designation" value="dennd5b"/>
</dbReference>
<dbReference type="eggNOG" id="KOG2080">
    <property type="taxonomic scope" value="Eukaryota"/>
</dbReference>
<dbReference type="InParanoid" id="Q6NXD8"/>
<dbReference type="OrthoDB" id="6019893at2759"/>
<dbReference type="PhylomeDB" id="Q6NXD8"/>
<dbReference type="PRO" id="PR:Q6NXD8"/>
<dbReference type="Proteomes" id="UP000000437">
    <property type="component" value="Chromosome 4"/>
</dbReference>
<dbReference type="Bgee" id="ENSDARG00000003789">
    <property type="expression patterns" value="Expressed in retina and 29 other cell types or tissues"/>
</dbReference>
<dbReference type="ExpressionAtlas" id="Q6NXD8">
    <property type="expression patterns" value="baseline and differential"/>
</dbReference>
<dbReference type="GO" id="GO:0016020">
    <property type="term" value="C:membrane"/>
    <property type="evidence" value="ECO:0007669"/>
    <property type="project" value="UniProtKB-SubCell"/>
</dbReference>
<dbReference type="GO" id="GO:0005085">
    <property type="term" value="F:guanyl-nucleotide exchange factor activity"/>
    <property type="evidence" value="ECO:0000250"/>
    <property type="project" value="UniProtKB"/>
</dbReference>
<dbReference type="GO" id="GO:0031267">
    <property type="term" value="F:small GTPase binding"/>
    <property type="evidence" value="ECO:0000318"/>
    <property type="project" value="GO_Central"/>
</dbReference>
<dbReference type="CDD" id="cd01757">
    <property type="entry name" value="PLAT_RAB6IP1"/>
    <property type="match status" value="1"/>
</dbReference>
<dbReference type="CDD" id="cd17691">
    <property type="entry name" value="RUN1_DENND5B"/>
    <property type="match status" value="1"/>
</dbReference>
<dbReference type="CDD" id="cd17693">
    <property type="entry name" value="RUN2_DENND5B"/>
    <property type="match status" value="1"/>
</dbReference>
<dbReference type="FunFam" id="1.20.58.900:FF:000003">
    <property type="entry name" value="DENN domain containing 5A"/>
    <property type="match status" value="1"/>
</dbReference>
<dbReference type="FunFam" id="2.60.60.20:FF:000001">
    <property type="entry name" value="DENN domain containing 5B"/>
    <property type="match status" value="1"/>
</dbReference>
<dbReference type="FunFam" id="1.20.58.900:FF:000007">
    <property type="entry name" value="DENN domain-containing protein 5B"/>
    <property type="match status" value="1"/>
</dbReference>
<dbReference type="Gene3D" id="1.20.58.900">
    <property type="match status" value="3"/>
</dbReference>
<dbReference type="Gene3D" id="3.30.450.200">
    <property type="match status" value="1"/>
</dbReference>
<dbReference type="Gene3D" id="3.40.50.11500">
    <property type="match status" value="1"/>
</dbReference>
<dbReference type="Gene3D" id="2.60.60.20">
    <property type="entry name" value="PLAT/LH2 domain"/>
    <property type="match status" value="1"/>
</dbReference>
<dbReference type="InterPro" id="IPR001194">
    <property type="entry name" value="cDENN_dom"/>
</dbReference>
<dbReference type="InterPro" id="IPR005112">
    <property type="entry name" value="dDENN_dom"/>
</dbReference>
<dbReference type="InterPro" id="IPR047278">
    <property type="entry name" value="DEN5A/B"/>
</dbReference>
<dbReference type="InterPro" id="IPR043153">
    <property type="entry name" value="DENN_C"/>
</dbReference>
<dbReference type="InterPro" id="IPR001024">
    <property type="entry name" value="PLAT/LH2_dom"/>
</dbReference>
<dbReference type="InterPro" id="IPR036392">
    <property type="entry name" value="PLAT/LH2_dom_sf"/>
</dbReference>
<dbReference type="InterPro" id="IPR047277">
    <property type="entry name" value="PLAT_RAB6IP1"/>
</dbReference>
<dbReference type="InterPro" id="IPR047293">
    <property type="entry name" value="RUN1_DENND5B"/>
</dbReference>
<dbReference type="InterPro" id="IPR047292">
    <property type="entry name" value="RUN2_DENND5B"/>
</dbReference>
<dbReference type="InterPro" id="IPR004012">
    <property type="entry name" value="Run_dom"/>
</dbReference>
<dbReference type="InterPro" id="IPR037213">
    <property type="entry name" value="Run_dom_sf"/>
</dbReference>
<dbReference type="InterPro" id="IPR037516">
    <property type="entry name" value="Tripartite_DENN"/>
</dbReference>
<dbReference type="InterPro" id="IPR005113">
    <property type="entry name" value="uDENN_dom"/>
</dbReference>
<dbReference type="PANTHER" id="PTHR46070:SF3">
    <property type="entry name" value="DENN DOMAIN-CONTAINING PROTEIN 5B"/>
    <property type="match status" value="1"/>
</dbReference>
<dbReference type="PANTHER" id="PTHR46070">
    <property type="entry name" value="PINSTRIPE, ISOFORM A"/>
    <property type="match status" value="1"/>
</dbReference>
<dbReference type="Pfam" id="PF03455">
    <property type="entry name" value="dDENN"/>
    <property type="match status" value="1"/>
</dbReference>
<dbReference type="Pfam" id="PF02141">
    <property type="entry name" value="DENN"/>
    <property type="match status" value="1"/>
</dbReference>
<dbReference type="Pfam" id="PF01477">
    <property type="entry name" value="PLAT"/>
    <property type="match status" value="1"/>
</dbReference>
<dbReference type="Pfam" id="PF02759">
    <property type="entry name" value="RUN"/>
    <property type="match status" value="2"/>
</dbReference>
<dbReference type="Pfam" id="PF03456">
    <property type="entry name" value="uDENN"/>
    <property type="match status" value="1"/>
</dbReference>
<dbReference type="SMART" id="SM00801">
    <property type="entry name" value="dDENN"/>
    <property type="match status" value="1"/>
</dbReference>
<dbReference type="SMART" id="SM00799">
    <property type="entry name" value="DENN"/>
    <property type="match status" value="1"/>
</dbReference>
<dbReference type="SMART" id="SM00593">
    <property type="entry name" value="RUN"/>
    <property type="match status" value="2"/>
</dbReference>
<dbReference type="SMART" id="SM00800">
    <property type="entry name" value="uDENN"/>
    <property type="match status" value="1"/>
</dbReference>
<dbReference type="SUPFAM" id="SSF49723">
    <property type="entry name" value="Lipase/lipooxygenase domain (PLAT/LH2 domain)"/>
    <property type="match status" value="1"/>
</dbReference>
<dbReference type="SUPFAM" id="SSF140741">
    <property type="entry name" value="RUN domain-like"/>
    <property type="match status" value="2"/>
</dbReference>
<dbReference type="PROSITE" id="PS50211">
    <property type="entry name" value="DENN"/>
    <property type="match status" value="1"/>
</dbReference>
<dbReference type="PROSITE" id="PS50095">
    <property type="entry name" value="PLAT"/>
    <property type="match status" value="1"/>
</dbReference>
<dbReference type="PROSITE" id="PS50826">
    <property type="entry name" value="RUN"/>
    <property type="match status" value="2"/>
</dbReference>
<gene>
    <name type="primary">dennd5b</name>
    <name type="ORF">si:ch211-11c20.2</name>
    <name type="ORF">zgc:77218</name>
</gene>
<proteinExistence type="evidence at transcript level"/>
<accession>Q6NXD8</accession>
<accession>Q5RJ77</accession>
<name>DEN5B_DANRE</name>
<feature type="chain" id="PRO_0000326533" description="DENN domain-containing protein 5B">
    <location>
        <begin position="1"/>
        <end position="1311"/>
    </location>
</feature>
<feature type="transmembrane region" description="Helical" evidence="2">
    <location>
        <begin position="962"/>
        <end position="982"/>
    </location>
</feature>
<feature type="domain" description="uDENN" evidence="5">
    <location>
        <begin position="53"/>
        <end position="270"/>
    </location>
</feature>
<feature type="domain" description="cDENN" evidence="5">
    <location>
        <begin position="289"/>
        <end position="452"/>
    </location>
</feature>
<feature type="domain" description="dDENN" evidence="5">
    <location>
        <begin position="454"/>
        <end position="619"/>
    </location>
</feature>
<feature type="domain" description="RUN 1" evidence="4">
    <location>
        <begin position="809"/>
        <end position="969"/>
    </location>
</feature>
<feature type="domain" description="PLAT" evidence="3">
    <location>
        <begin position="973"/>
        <end position="1081"/>
    </location>
</feature>
<feature type="domain" description="RUN 2" evidence="4">
    <location>
        <begin position="1155"/>
        <end position="1306"/>
    </location>
</feature>
<feature type="region of interest" description="Disordered" evidence="6">
    <location>
        <begin position="154"/>
        <end position="201"/>
    </location>
</feature>
<feature type="region of interest" description="Disordered" evidence="6">
    <location>
        <begin position="854"/>
        <end position="874"/>
    </location>
</feature>
<feature type="compositionally biased region" description="Polar residues" evidence="6">
    <location>
        <begin position="154"/>
        <end position="165"/>
    </location>
</feature>
<feature type="compositionally biased region" description="Low complexity" evidence="6">
    <location>
        <begin position="166"/>
        <end position="187"/>
    </location>
</feature>
<feature type="sequence conflict" description="In Ref. 2; AAH67136." evidence="7" ref="2">
    <original>P</original>
    <variation>L</variation>
    <location>
        <position position="140"/>
    </location>
</feature>
<feature type="sequence conflict" description="In Ref. 2; AAH67136." evidence="7" ref="2">
    <original>H</original>
    <variation>N</variation>
    <location>
        <position position="157"/>
    </location>
</feature>
<reference key="1">
    <citation type="journal article" date="2013" name="Nature">
        <title>The zebrafish reference genome sequence and its relationship to the human genome.</title>
        <authorList>
            <person name="Howe K."/>
            <person name="Clark M.D."/>
            <person name="Torroja C.F."/>
            <person name="Torrance J."/>
            <person name="Berthelot C."/>
            <person name="Muffato M."/>
            <person name="Collins J.E."/>
            <person name="Humphray S."/>
            <person name="McLaren K."/>
            <person name="Matthews L."/>
            <person name="McLaren S."/>
            <person name="Sealy I."/>
            <person name="Caccamo M."/>
            <person name="Churcher C."/>
            <person name="Scott C."/>
            <person name="Barrett J.C."/>
            <person name="Koch R."/>
            <person name="Rauch G.J."/>
            <person name="White S."/>
            <person name="Chow W."/>
            <person name="Kilian B."/>
            <person name="Quintais L.T."/>
            <person name="Guerra-Assuncao J.A."/>
            <person name="Zhou Y."/>
            <person name="Gu Y."/>
            <person name="Yen J."/>
            <person name="Vogel J.H."/>
            <person name="Eyre T."/>
            <person name="Redmond S."/>
            <person name="Banerjee R."/>
            <person name="Chi J."/>
            <person name="Fu B."/>
            <person name="Langley E."/>
            <person name="Maguire S.F."/>
            <person name="Laird G.K."/>
            <person name="Lloyd D."/>
            <person name="Kenyon E."/>
            <person name="Donaldson S."/>
            <person name="Sehra H."/>
            <person name="Almeida-King J."/>
            <person name="Loveland J."/>
            <person name="Trevanion S."/>
            <person name="Jones M."/>
            <person name="Quail M."/>
            <person name="Willey D."/>
            <person name="Hunt A."/>
            <person name="Burton J."/>
            <person name="Sims S."/>
            <person name="McLay K."/>
            <person name="Plumb B."/>
            <person name="Davis J."/>
            <person name="Clee C."/>
            <person name="Oliver K."/>
            <person name="Clark R."/>
            <person name="Riddle C."/>
            <person name="Elliot D."/>
            <person name="Threadgold G."/>
            <person name="Harden G."/>
            <person name="Ware D."/>
            <person name="Begum S."/>
            <person name="Mortimore B."/>
            <person name="Kerry G."/>
            <person name="Heath P."/>
            <person name="Phillimore B."/>
            <person name="Tracey A."/>
            <person name="Corby N."/>
            <person name="Dunn M."/>
            <person name="Johnson C."/>
            <person name="Wood J."/>
            <person name="Clark S."/>
            <person name="Pelan S."/>
            <person name="Griffiths G."/>
            <person name="Smith M."/>
            <person name="Glithero R."/>
            <person name="Howden P."/>
            <person name="Barker N."/>
            <person name="Lloyd C."/>
            <person name="Stevens C."/>
            <person name="Harley J."/>
            <person name="Holt K."/>
            <person name="Panagiotidis G."/>
            <person name="Lovell J."/>
            <person name="Beasley H."/>
            <person name="Henderson C."/>
            <person name="Gordon D."/>
            <person name="Auger K."/>
            <person name="Wright D."/>
            <person name="Collins J."/>
            <person name="Raisen C."/>
            <person name="Dyer L."/>
            <person name="Leung K."/>
            <person name="Robertson L."/>
            <person name="Ambridge K."/>
            <person name="Leongamornlert D."/>
            <person name="McGuire S."/>
            <person name="Gilderthorp R."/>
            <person name="Griffiths C."/>
            <person name="Manthravadi D."/>
            <person name="Nichol S."/>
            <person name="Barker G."/>
            <person name="Whitehead S."/>
            <person name="Kay M."/>
            <person name="Brown J."/>
            <person name="Murnane C."/>
            <person name="Gray E."/>
            <person name="Humphries M."/>
            <person name="Sycamore N."/>
            <person name="Barker D."/>
            <person name="Saunders D."/>
            <person name="Wallis J."/>
            <person name="Babbage A."/>
            <person name="Hammond S."/>
            <person name="Mashreghi-Mohammadi M."/>
            <person name="Barr L."/>
            <person name="Martin S."/>
            <person name="Wray P."/>
            <person name="Ellington A."/>
            <person name="Matthews N."/>
            <person name="Ellwood M."/>
            <person name="Woodmansey R."/>
            <person name="Clark G."/>
            <person name="Cooper J."/>
            <person name="Tromans A."/>
            <person name="Grafham D."/>
            <person name="Skuce C."/>
            <person name="Pandian R."/>
            <person name="Andrews R."/>
            <person name="Harrison E."/>
            <person name="Kimberley A."/>
            <person name="Garnett J."/>
            <person name="Fosker N."/>
            <person name="Hall R."/>
            <person name="Garner P."/>
            <person name="Kelly D."/>
            <person name="Bird C."/>
            <person name="Palmer S."/>
            <person name="Gehring I."/>
            <person name="Berger A."/>
            <person name="Dooley C.M."/>
            <person name="Ersan-Urun Z."/>
            <person name="Eser C."/>
            <person name="Geiger H."/>
            <person name="Geisler M."/>
            <person name="Karotki L."/>
            <person name="Kirn A."/>
            <person name="Konantz J."/>
            <person name="Konantz M."/>
            <person name="Oberlander M."/>
            <person name="Rudolph-Geiger S."/>
            <person name="Teucke M."/>
            <person name="Lanz C."/>
            <person name="Raddatz G."/>
            <person name="Osoegawa K."/>
            <person name="Zhu B."/>
            <person name="Rapp A."/>
            <person name="Widaa S."/>
            <person name="Langford C."/>
            <person name="Yang F."/>
            <person name="Schuster S.C."/>
            <person name="Carter N.P."/>
            <person name="Harrow J."/>
            <person name="Ning Z."/>
            <person name="Herrero J."/>
            <person name="Searle S.M."/>
            <person name="Enright A."/>
            <person name="Geisler R."/>
            <person name="Plasterk R.H."/>
            <person name="Lee C."/>
            <person name="Westerfield M."/>
            <person name="de Jong P.J."/>
            <person name="Zon L.I."/>
            <person name="Postlethwait J.H."/>
            <person name="Nusslein-Volhard C."/>
            <person name="Hubbard T.J."/>
            <person name="Roest Crollius H."/>
            <person name="Rogers J."/>
            <person name="Stemple D.L."/>
        </authorList>
    </citation>
    <scope>NUCLEOTIDE SEQUENCE [LARGE SCALE GENOMIC DNA]</scope>
    <source>
        <strain>Tuebingen</strain>
    </source>
</reference>
<reference key="2">
    <citation type="submission" date="2004-03" db="EMBL/GenBank/DDBJ databases">
        <authorList>
            <consortium name="NIH - Zebrafish Gene Collection (ZGC) project"/>
        </authorList>
    </citation>
    <scope>NUCLEOTIDE SEQUENCE [LARGE SCALE MRNA]</scope>
    <source>
        <tissue>Embryo</tissue>
    </source>
</reference>
<protein>
    <recommendedName>
        <fullName>DENN domain-containing protein 5B</fullName>
    </recommendedName>
    <alternativeName>
        <fullName>Rab6IP1-like protein</fullName>
    </alternativeName>
</protein>
<organism>
    <name type="scientific">Danio rerio</name>
    <name type="common">Zebrafish</name>
    <name type="synonym">Brachydanio rerio</name>
    <dbReference type="NCBI Taxonomy" id="7955"/>
    <lineage>
        <taxon>Eukaryota</taxon>
        <taxon>Metazoa</taxon>
        <taxon>Chordata</taxon>
        <taxon>Craniata</taxon>
        <taxon>Vertebrata</taxon>
        <taxon>Euteleostomi</taxon>
        <taxon>Actinopterygii</taxon>
        <taxon>Neopterygii</taxon>
        <taxon>Teleostei</taxon>
        <taxon>Ostariophysi</taxon>
        <taxon>Cypriniformes</taxon>
        <taxon>Danionidae</taxon>
        <taxon>Danioninae</taxon>
        <taxon>Danio</taxon>
    </lineage>
</organism>
<evidence type="ECO:0000250" key="1"/>
<evidence type="ECO:0000255" key="2"/>
<evidence type="ECO:0000255" key="3">
    <source>
        <dbReference type="PROSITE-ProRule" id="PRU00152"/>
    </source>
</evidence>
<evidence type="ECO:0000255" key="4">
    <source>
        <dbReference type="PROSITE-ProRule" id="PRU00178"/>
    </source>
</evidence>
<evidence type="ECO:0000255" key="5">
    <source>
        <dbReference type="PROSITE-ProRule" id="PRU00304"/>
    </source>
</evidence>
<evidence type="ECO:0000256" key="6">
    <source>
        <dbReference type="SAM" id="MobiDB-lite"/>
    </source>
</evidence>
<evidence type="ECO:0000305" key="7"/>
<sequence length="1311" mass="147701">MSATMSGSGSAPCRFAHYFIVCGLDDETGLEPDALAALYQWLEADRQGKDPEATAAGENFDQSPLKRTFKSKVLAHYPENIECNPFDQDAVNMLCMPKGLSFRTQRDSLAPHFHSFLITREDGSRTYGFVHTFYEEVTSPQICSAMQTLHQMHQAEHNTSAQNCTSSSSSSSSSSSSSSMDSLSSSLDDVDSPSAHGGRRTCEGYDSIRDTLYVSKAMCLIAPMPFMHACKRFLAQMHRAVSCSPPPPLPLESYIYNVLYEVPLPASGRSLKFHGVYEPILCQRPGVGELPLADFPLADAFRLLGVENLVQLFTCVLLEMQILLYSQDYQRLMVVAEGITTLLFPFQWQHVYVPILPASLLHFLDAPVPYLMGLQSKEGTDRSKLELPQEANLCFVDIDNHCIELPEDFPQFPNRSEFIQELSEVLLSFGQSPEGGSSSPEPAVMSLQTSVLEKELKSTSLRELVDDKTNGNLGGEALDVLELLQGNPTLERLQALAKRTGVKVARLEALAAGQKGDEGVGGRSPVEEEELRNAKLNVQLREVFAARFATMFADYESFVIQNSPDLESWLTNREQMHNFDKASFLSDQPEPYLPFLSHFIETQMFATFIDNKIMSQWEEKEPLLRVFDGRIEKARLYNVRAPSLRSSVYQKCTFLKESAQAIEQRLRKIDHTAIHPHLLDMKIGQGKYQQGFFPKLQADVLASGPTSNKWSNRTCSTQRRVERHRQQNEHLVLDNELKEKYMQEARNLGKNLRQPKLSDLSPAVIAQTNWKFVEGLLKECKMKTKRMLVEKMGREAVELGHGEANITGLEENTLIASLCDLLERIWSHGLQVKQGKSALWSHLLHYQAREEKNEQQLESPVSNGQERRKTESSVGLPGLRVSVIQDMRHIQNMAEIKTDVGRARAWIRLSLEKKLLSQHLKQLLSNQALTKKLYKRYAFLRCEEEKEQFLFHLLSLNAVDYFCFTSVFTTIMIPYRAVIIPIKKLSNAMTTSNPWLCVSGELGDSGILQITKNILEMTFDCQNLGKLTTVQLGHDNSGLLAKWLVDCVMVRNEITGHTYKFPCGRWLGKGVDDGSLERVLIGEFVVPCGDDEGGRGSKTPPLQRSPSQIRRISITSLTGKGNKPTTVQIQESIGEAVNNIIKHFHKPEKERGSLTVLLCGEGGLVWALEQFFHHGFRSARIFQKNVFVWDFFERIVAFMENRDQTGDLQESPEPLSLNSESLCRYVNAINNMPRNIGKDGKFQLLVCLGARDRLLPQWLPLLAESPVITRMYEENALLRDKLTVSSLLGVLETLHDFPITLETSLTKSVEL</sequence>